<organism>
    <name type="scientific">Bacillus licheniformis (strain ATCC 14580 / DSM 13 / JCM 2505 / CCUG 7422 / NBRC 12200 / NCIMB 9375 / NCTC 10341 / NRRL NRS-1264 / Gibson 46)</name>
    <dbReference type="NCBI Taxonomy" id="279010"/>
    <lineage>
        <taxon>Bacteria</taxon>
        <taxon>Bacillati</taxon>
        <taxon>Bacillota</taxon>
        <taxon>Bacilli</taxon>
        <taxon>Bacillales</taxon>
        <taxon>Bacillaceae</taxon>
        <taxon>Bacillus</taxon>
    </lineage>
</organism>
<keyword id="KW-0012">Acyltransferase</keyword>
<keyword id="KW-0028">Amino-acid biosynthesis</keyword>
<keyword id="KW-0055">Arginine biosynthesis</keyword>
<keyword id="KW-0068">Autocatalytic cleavage</keyword>
<keyword id="KW-0963">Cytoplasm</keyword>
<keyword id="KW-0511">Multifunctional enzyme</keyword>
<keyword id="KW-1185">Reference proteome</keyword>
<keyword id="KW-0808">Transferase</keyword>
<accession>Q65LE9</accession>
<accession>Q62WT9</accession>
<evidence type="ECO:0000255" key="1">
    <source>
        <dbReference type="HAMAP-Rule" id="MF_01106"/>
    </source>
</evidence>
<dbReference type="EC" id="2.3.1.35" evidence="1"/>
<dbReference type="EC" id="2.3.1.1" evidence="1"/>
<dbReference type="EMBL" id="AE017333">
    <property type="protein sequence ID" value="AAU40115.1"/>
    <property type="molecule type" value="Genomic_DNA"/>
</dbReference>
<dbReference type="EMBL" id="CP000002">
    <property type="protein sequence ID" value="AAU22769.1"/>
    <property type="molecule type" value="Genomic_DNA"/>
</dbReference>
<dbReference type="RefSeq" id="WP_011197757.1">
    <property type="nucleotide sequence ID" value="NC_006322.1"/>
</dbReference>
<dbReference type="SMR" id="Q65LE9"/>
<dbReference type="STRING" id="279010.BL03242"/>
<dbReference type="MEROPS" id="T05.002"/>
<dbReference type="GeneID" id="92862210"/>
<dbReference type="KEGG" id="bld:BLi01207"/>
<dbReference type="KEGG" id="bli:BL03242"/>
<dbReference type="eggNOG" id="COG1364">
    <property type="taxonomic scope" value="Bacteria"/>
</dbReference>
<dbReference type="HOGENOM" id="CLU_027172_1_0_9"/>
<dbReference type="UniPathway" id="UPA00068">
    <property type="reaction ID" value="UER00106"/>
</dbReference>
<dbReference type="UniPathway" id="UPA00068">
    <property type="reaction ID" value="UER00111"/>
</dbReference>
<dbReference type="Proteomes" id="UP000000606">
    <property type="component" value="Chromosome"/>
</dbReference>
<dbReference type="GO" id="GO:0005737">
    <property type="term" value="C:cytoplasm"/>
    <property type="evidence" value="ECO:0007669"/>
    <property type="project" value="UniProtKB-SubCell"/>
</dbReference>
<dbReference type="GO" id="GO:0004358">
    <property type="term" value="F:glutamate N-acetyltransferase activity"/>
    <property type="evidence" value="ECO:0007669"/>
    <property type="project" value="UniProtKB-UniRule"/>
</dbReference>
<dbReference type="GO" id="GO:0004042">
    <property type="term" value="F:L-glutamate N-acetyltransferase activity"/>
    <property type="evidence" value="ECO:0007669"/>
    <property type="project" value="UniProtKB-UniRule"/>
</dbReference>
<dbReference type="GO" id="GO:0006526">
    <property type="term" value="P:L-arginine biosynthetic process"/>
    <property type="evidence" value="ECO:0007669"/>
    <property type="project" value="UniProtKB-UniRule"/>
</dbReference>
<dbReference type="GO" id="GO:0006592">
    <property type="term" value="P:ornithine biosynthetic process"/>
    <property type="evidence" value="ECO:0007669"/>
    <property type="project" value="TreeGrafter"/>
</dbReference>
<dbReference type="CDD" id="cd02152">
    <property type="entry name" value="OAT"/>
    <property type="match status" value="1"/>
</dbReference>
<dbReference type="FunFam" id="3.10.20.340:FF:000001">
    <property type="entry name" value="Arginine biosynthesis bifunctional protein ArgJ, chloroplastic"/>
    <property type="match status" value="1"/>
</dbReference>
<dbReference type="FunFam" id="3.60.70.12:FF:000001">
    <property type="entry name" value="Arginine biosynthesis bifunctional protein ArgJ, chloroplastic"/>
    <property type="match status" value="1"/>
</dbReference>
<dbReference type="FunFam" id="3.30.2330.10:FF:000001">
    <property type="entry name" value="Arginine biosynthesis bifunctional protein ArgJ, mitochondrial"/>
    <property type="match status" value="1"/>
</dbReference>
<dbReference type="Gene3D" id="3.30.2330.10">
    <property type="entry name" value="arginine biosynthesis bifunctional protein suprefamily"/>
    <property type="match status" value="1"/>
</dbReference>
<dbReference type="Gene3D" id="3.10.20.340">
    <property type="entry name" value="ArgJ beta chain, C-terminal domain"/>
    <property type="match status" value="1"/>
</dbReference>
<dbReference type="Gene3D" id="3.60.70.12">
    <property type="entry name" value="L-amino peptidase D-ALA esterase/amidase"/>
    <property type="match status" value="1"/>
</dbReference>
<dbReference type="HAMAP" id="MF_01106">
    <property type="entry name" value="ArgJ"/>
    <property type="match status" value="1"/>
</dbReference>
<dbReference type="InterPro" id="IPR002813">
    <property type="entry name" value="Arg_biosynth_ArgJ"/>
</dbReference>
<dbReference type="InterPro" id="IPR016117">
    <property type="entry name" value="ArgJ-like_dom_sf"/>
</dbReference>
<dbReference type="InterPro" id="IPR042195">
    <property type="entry name" value="ArgJ_beta_C"/>
</dbReference>
<dbReference type="NCBIfam" id="TIGR00120">
    <property type="entry name" value="ArgJ"/>
    <property type="match status" value="1"/>
</dbReference>
<dbReference type="NCBIfam" id="NF003802">
    <property type="entry name" value="PRK05388.1"/>
    <property type="match status" value="1"/>
</dbReference>
<dbReference type="PANTHER" id="PTHR23100">
    <property type="entry name" value="ARGININE BIOSYNTHESIS BIFUNCTIONAL PROTEIN ARGJ"/>
    <property type="match status" value="1"/>
</dbReference>
<dbReference type="PANTHER" id="PTHR23100:SF0">
    <property type="entry name" value="ARGININE BIOSYNTHESIS BIFUNCTIONAL PROTEIN ARGJ, MITOCHONDRIAL"/>
    <property type="match status" value="1"/>
</dbReference>
<dbReference type="Pfam" id="PF01960">
    <property type="entry name" value="ArgJ"/>
    <property type="match status" value="1"/>
</dbReference>
<dbReference type="SUPFAM" id="SSF56266">
    <property type="entry name" value="DmpA/ArgJ-like"/>
    <property type="match status" value="1"/>
</dbReference>
<comment type="function">
    <text evidence="1">Catalyzes two activities which are involved in the cyclic version of arginine biosynthesis: the synthesis of N-acetylglutamate from glutamate and acetyl-CoA as the acetyl donor, and of ornithine by transacetylation between N(2)-acetylornithine and glutamate.</text>
</comment>
<comment type="catalytic activity">
    <reaction evidence="1">
        <text>N(2)-acetyl-L-ornithine + L-glutamate = N-acetyl-L-glutamate + L-ornithine</text>
        <dbReference type="Rhea" id="RHEA:15349"/>
        <dbReference type="ChEBI" id="CHEBI:29985"/>
        <dbReference type="ChEBI" id="CHEBI:44337"/>
        <dbReference type="ChEBI" id="CHEBI:46911"/>
        <dbReference type="ChEBI" id="CHEBI:57805"/>
        <dbReference type="EC" id="2.3.1.35"/>
    </reaction>
</comment>
<comment type="catalytic activity">
    <reaction evidence="1">
        <text>L-glutamate + acetyl-CoA = N-acetyl-L-glutamate + CoA + H(+)</text>
        <dbReference type="Rhea" id="RHEA:24292"/>
        <dbReference type="ChEBI" id="CHEBI:15378"/>
        <dbReference type="ChEBI" id="CHEBI:29985"/>
        <dbReference type="ChEBI" id="CHEBI:44337"/>
        <dbReference type="ChEBI" id="CHEBI:57287"/>
        <dbReference type="ChEBI" id="CHEBI:57288"/>
        <dbReference type="EC" id="2.3.1.1"/>
    </reaction>
</comment>
<comment type="pathway">
    <text evidence="1">Amino-acid biosynthesis; L-arginine biosynthesis; L-ornithine and N-acetyl-L-glutamate from L-glutamate and N(2)-acetyl-L-ornithine (cyclic): step 1/1.</text>
</comment>
<comment type="pathway">
    <text evidence="1">Amino-acid biosynthesis; L-arginine biosynthesis; N(2)-acetyl-L-ornithine from L-glutamate: step 1/4.</text>
</comment>
<comment type="subunit">
    <text evidence="1">Heterotetramer of two alpha and two beta chains.</text>
</comment>
<comment type="subcellular location">
    <subcellularLocation>
        <location evidence="1">Cytoplasm</location>
    </subcellularLocation>
</comment>
<comment type="similarity">
    <text evidence="1">Belongs to the ArgJ family.</text>
</comment>
<protein>
    <recommendedName>
        <fullName evidence="1">Arginine biosynthesis bifunctional protein ArgJ</fullName>
    </recommendedName>
    <domain>
        <recommendedName>
            <fullName evidence="1">Glutamate N-acetyltransferase</fullName>
            <ecNumber evidence="1">2.3.1.35</ecNumber>
        </recommendedName>
        <alternativeName>
            <fullName evidence="1">Ornithine acetyltransferase</fullName>
            <shortName evidence="1">OATase</shortName>
        </alternativeName>
        <alternativeName>
            <fullName evidence="1">Ornithine transacetylase</fullName>
        </alternativeName>
    </domain>
    <domain>
        <recommendedName>
            <fullName evidence="1">Amino-acid acetyltransferase</fullName>
            <ecNumber evidence="1">2.3.1.1</ecNumber>
        </recommendedName>
        <alternativeName>
            <fullName evidence="1">N-acetylglutamate synthase</fullName>
            <shortName evidence="1">AGSase</shortName>
        </alternativeName>
    </domain>
    <component>
        <recommendedName>
            <fullName evidence="1">Arginine biosynthesis bifunctional protein ArgJ alpha chain</fullName>
        </recommendedName>
    </component>
    <component>
        <recommendedName>
            <fullName evidence="1">Arginine biosynthesis bifunctional protein ArgJ beta chain</fullName>
        </recommendedName>
    </component>
</protein>
<name>ARGJ_BACLD</name>
<sequence length="406" mass="43714">MIQVSQDSIKKTDGSVASPKGYLAKGVHCGLRYSKKDLGIIISSRPAVSAAVYTQSHFQAAPIKVTQESLKKSAHLQAVIVNSANANACTGEQGLKDAYEMRRQSADMLGIEPDLVAVSSTGVIGEYLNMENITKGISLLAETEPAEGDFEEAILTTDTVIKQTCYELMIGGQKVTIGGAAKGSGMIHPNMATMLGFVTTDACIEESALQRALREITDVSFNQITVDGDTSTNDMVLVMANGCAGNERLHEEHEDWPVFKKGLQLVCTDLAKQIARDGEGATKLIEVEVNGAKSNLEAQIIAKKIVGSNLVKTAVYGTDANWGRIVVAIGDSMAAVTPEKVEIRLGGQCLFKNNEPQPFSEELAKTYLENSEVKIEVFMQEGEGKGTAWGCDLTYEYVKINASYRT</sequence>
<proteinExistence type="inferred from homology"/>
<gene>
    <name evidence="1" type="primary">argJ</name>
    <name type="ordered locus">BLi01207</name>
    <name type="ordered locus">BL03242</name>
</gene>
<feature type="chain" id="PRO_0000227206" description="Arginine biosynthesis bifunctional protein ArgJ alpha chain" evidence="1">
    <location>
        <begin position="1"/>
        <end position="192"/>
    </location>
</feature>
<feature type="chain" id="PRO_0000227207" description="Arginine biosynthesis bifunctional protein ArgJ beta chain" evidence="1">
    <location>
        <begin position="193"/>
        <end position="406"/>
    </location>
</feature>
<feature type="active site" description="Nucleophile" evidence="1">
    <location>
        <position position="193"/>
    </location>
</feature>
<feature type="binding site" evidence="1">
    <location>
        <position position="156"/>
    </location>
    <ligand>
        <name>substrate</name>
    </ligand>
</feature>
<feature type="binding site" evidence="1">
    <location>
        <position position="182"/>
    </location>
    <ligand>
        <name>substrate</name>
    </ligand>
</feature>
<feature type="binding site" evidence="1">
    <location>
        <position position="193"/>
    </location>
    <ligand>
        <name>substrate</name>
    </ligand>
</feature>
<feature type="binding site" evidence="1">
    <location>
        <position position="279"/>
    </location>
    <ligand>
        <name>substrate</name>
    </ligand>
</feature>
<feature type="binding site" evidence="1">
    <location>
        <position position="401"/>
    </location>
    <ligand>
        <name>substrate</name>
    </ligand>
</feature>
<feature type="binding site" evidence="1">
    <location>
        <position position="406"/>
    </location>
    <ligand>
        <name>substrate</name>
    </ligand>
</feature>
<feature type="site" description="Involved in the stabilization of negative charge on the oxyanion by the formation of the oxyanion hole" evidence="1">
    <location>
        <position position="121"/>
    </location>
</feature>
<feature type="site" description="Involved in the stabilization of negative charge on the oxyanion by the formation of the oxyanion hole" evidence="1">
    <location>
        <position position="122"/>
    </location>
</feature>
<feature type="site" description="Cleavage; by autolysis" evidence="1">
    <location>
        <begin position="192"/>
        <end position="193"/>
    </location>
</feature>
<reference key="1">
    <citation type="journal article" date="2004" name="J. Mol. Microbiol. Biotechnol.">
        <title>The complete genome sequence of Bacillus licheniformis DSM13, an organism with great industrial potential.</title>
        <authorList>
            <person name="Veith B."/>
            <person name="Herzberg C."/>
            <person name="Steckel S."/>
            <person name="Feesche J."/>
            <person name="Maurer K.H."/>
            <person name="Ehrenreich P."/>
            <person name="Baeumer S."/>
            <person name="Henne A."/>
            <person name="Liesegang H."/>
            <person name="Merkl R."/>
            <person name="Ehrenreich A."/>
            <person name="Gottschalk G."/>
        </authorList>
    </citation>
    <scope>NUCLEOTIDE SEQUENCE [LARGE SCALE GENOMIC DNA]</scope>
    <source>
        <strain>ATCC 14580 / DSM 13 / JCM 2505 / CCUG 7422 / NBRC 12200 / NCIMB 9375 / NCTC 10341 / NRRL NRS-1264 / Gibson 46</strain>
    </source>
</reference>
<reference key="2">
    <citation type="journal article" date="2004" name="Genome Biol.">
        <title>Complete genome sequence of the industrial bacterium Bacillus licheniformis and comparisons with closely related Bacillus species.</title>
        <authorList>
            <person name="Rey M.W."/>
            <person name="Ramaiya P."/>
            <person name="Nelson B.A."/>
            <person name="Brody-Karpin S.D."/>
            <person name="Zaretsky E.J."/>
            <person name="Tang M."/>
            <person name="Lopez de Leon A."/>
            <person name="Xiang H."/>
            <person name="Gusti V."/>
            <person name="Clausen I.G."/>
            <person name="Olsen P.B."/>
            <person name="Rasmussen M.D."/>
            <person name="Andersen J.T."/>
            <person name="Joergensen P.L."/>
            <person name="Larsen T.S."/>
            <person name="Sorokin A."/>
            <person name="Bolotin A."/>
            <person name="Lapidus A."/>
            <person name="Galleron N."/>
            <person name="Ehrlich S.D."/>
            <person name="Berka R.M."/>
        </authorList>
    </citation>
    <scope>NUCLEOTIDE SEQUENCE [LARGE SCALE GENOMIC DNA]</scope>
    <source>
        <strain>ATCC 14580 / DSM 13 / JCM 2505 / CCUG 7422 / NBRC 12200 / NCIMB 9375 / NCTC 10341 / NRRL NRS-1264 / Gibson 46</strain>
    </source>
</reference>